<accession>P9WQP2</accession>
<accession>D6MJP3</accession>
<accession>F2GDG3</accession>
<accession>P0A4V2</accession>
<accession>P17944</accession>
<accession>P17996</accession>
<reference key="1">
    <citation type="journal article" date="2002" name="J. Bacteriol.">
        <title>Whole-genome comparison of Mycobacterium tuberculosis clinical and laboratory strains.</title>
        <authorList>
            <person name="Fleischmann R.D."/>
            <person name="Alland D."/>
            <person name="Eisen J.A."/>
            <person name="Carpenter L."/>
            <person name="White O."/>
            <person name="Peterson J.D."/>
            <person name="DeBoy R.T."/>
            <person name="Dodson R.J."/>
            <person name="Gwinn M.L."/>
            <person name="Haft D.H."/>
            <person name="Hickey E.K."/>
            <person name="Kolonay J.F."/>
            <person name="Nelson W.C."/>
            <person name="Umayam L.A."/>
            <person name="Ermolaeva M.D."/>
            <person name="Salzberg S.L."/>
            <person name="Delcher A."/>
            <person name="Utterback T.R."/>
            <person name="Weidman J.F."/>
            <person name="Khouri H.M."/>
            <person name="Gill J."/>
            <person name="Mikula A."/>
            <person name="Bishai W."/>
            <person name="Jacobs W.R. Jr."/>
            <person name="Venter J.C."/>
            <person name="Fraser C.M."/>
        </authorList>
    </citation>
    <scope>NUCLEOTIDE SEQUENCE [LARGE SCALE GENOMIC DNA]</scope>
    <source>
        <strain>CDC 1551 / Oshkosh</strain>
    </source>
</reference>
<keyword id="KW-0012">Acyltransferase</keyword>
<keyword id="KW-0134">Cell wall</keyword>
<keyword id="KW-0963">Cytoplasm</keyword>
<keyword id="KW-1015">Disulfide bond</keyword>
<keyword id="KW-1185">Reference proteome</keyword>
<keyword id="KW-0964">Secreted</keyword>
<keyword id="KW-0732">Signal</keyword>
<keyword id="KW-0808">Transferase</keyword>
<gene>
    <name type="primary">fbpA</name>
    <name type="synonym">mpt44</name>
    <name type="ordered locus">MT3911</name>
</gene>
<comment type="function">
    <text evidence="1">The antigen 85 proteins (FbpA, FbpB, FbpC) are responsible for the high affinity of mycobacteria for fibronectin, a large adhesive glycoprotein, which facilitates the attachment of M.tuberculosis to murine alveolar macrophages (AMs). They also help to maintain the integrity of the cell wall by catalyzing the transfer of mycolic acids to cell wall arabinogalactan, and through the synthesis of alpha,alpha-trehalose dimycolate (TDM, cord factor). They catalyze the transfer of a mycoloyl residue from one molecule of alpha,alpha-trehalose monomycolate (TMM) to another TMM, leading to the formation of TDM. FbpA mediates triacylglycerol (TAG) formation with long-chain acyl-CoA as the acyl donor and 1,2-dipalmitoyl-sn-glycerol (1,2-dipalmitin) as the acyl acceptor (By similarity).</text>
</comment>
<comment type="catalytic activity">
    <reaction>
        <text>an acyl-CoA + a 1,2-diacyl-sn-glycerol = a triacyl-sn-glycerol + CoA</text>
        <dbReference type="Rhea" id="RHEA:10868"/>
        <dbReference type="ChEBI" id="CHEBI:17815"/>
        <dbReference type="ChEBI" id="CHEBI:57287"/>
        <dbReference type="ChEBI" id="CHEBI:58342"/>
        <dbReference type="ChEBI" id="CHEBI:64615"/>
        <dbReference type="EC" id="2.3.1.20"/>
    </reaction>
</comment>
<comment type="catalytic activity">
    <reaction>
        <text>2 alpha,alpha'-trehalose 6-mycolate = alpha,alpha'-trehalose 6,6'-bismycolate + alpha,alpha-trehalose</text>
        <dbReference type="Rhea" id="RHEA:23472"/>
        <dbReference type="ChEBI" id="CHEBI:16551"/>
        <dbReference type="ChEBI" id="CHEBI:18195"/>
        <dbReference type="ChEBI" id="CHEBI:18234"/>
        <dbReference type="EC" id="2.3.1.122"/>
    </reaction>
</comment>
<comment type="subunit">
    <text evidence="1">Homodimer.</text>
</comment>
<comment type="subcellular location">
    <subcellularLocation>
        <location evidence="1">Secreted</location>
        <location evidence="1">Cell wall</location>
    </subcellularLocation>
    <subcellularLocation>
        <location evidence="1">Cytoplasm</location>
    </subcellularLocation>
</comment>
<comment type="similarity">
    <text evidence="3">Belongs to the mycobacterial A85 antigen family.</text>
</comment>
<comment type="sequence caution" evidence="3">
    <conflict type="erroneous initiation">
        <sequence resource="EMBL-CDS" id="AAK48277"/>
    </conflict>
    <text>Extended N-terminus.</text>
</comment>
<sequence>MQLVDRVRGAVTGMSRRLVVGAVGAALVSGLVGAVGGTATAGAFSRPGLPVEYLQVPSPSMGRDIKVQFQSGGANSPALYLLDGLRAQDDFSGWDINTPAFEWYDQSGLSVVMPVGGQSSFYSDWYQPACGKAGCQTYKWETFLTSELPGWLQANRHVKPTGSAVVGLSMAASSALTLAIYHPQQFVYAGAMSGLLDPSQAMGPTLIGLAMGDAGGYKASDMWGPKEDPAWQRNDPLLNVGKLIANNTRVWVYCGNGKPSDLGGNNLPAKFLEGFVRTSNIKFQDAYNAGGGHNGVFDFPDSGTHSWEYWGAQLNAMKPDLQRALGATPNTGPAPQGA</sequence>
<name>A85A_MYCTO</name>
<evidence type="ECO:0000250" key="1"/>
<evidence type="ECO:0000255" key="2"/>
<evidence type="ECO:0000305" key="3"/>
<dbReference type="EC" id="2.3.1.122"/>
<dbReference type="EC" id="2.3.1.20"/>
<dbReference type="EMBL" id="AE000516">
    <property type="protein sequence ID" value="AAK48277.1"/>
    <property type="status" value="ALT_INIT"/>
    <property type="molecule type" value="Genomic_DNA"/>
</dbReference>
<dbReference type="PIR" id="H70887">
    <property type="entry name" value="H70887"/>
</dbReference>
<dbReference type="RefSeq" id="WP_003900759.1">
    <property type="nucleotide sequence ID" value="NZ_KK341227.1"/>
</dbReference>
<dbReference type="SMR" id="P9WQP2"/>
<dbReference type="ESTHER" id="myctu-a85a">
    <property type="family name" value="A85-Mycolyl-transferase"/>
</dbReference>
<dbReference type="GeneID" id="45427805"/>
<dbReference type="KEGG" id="mtc:MT3911"/>
<dbReference type="PATRIC" id="fig|83331.31.peg.4208"/>
<dbReference type="HOGENOM" id="CLU_026624_3_1_11"/>
<dbReference type="Proteomes" id="UP000001020">
    <property type="component" value="Chromosome"/>
</dbReference>
<dbReference type="GO" id="GO:0005737">
    <property type="term" value="C:cytoplasm"/>
    <property type="evidence" value="ECO:0007669"/>
    <property type="project" value="UniProtKB-SubCell"/>
</dbReference>
<dbReference type="GO" id="GO:0005576">
    <property type="term" value="C:extracellular region"/>
    <property type="evidence" value="ECO:0007669"/>
    <property type="project" value="UniProtKB-KW"/>
</dbReference>
<dbReference type="GO" id="GO:0004144">
    <property type="term" value="F:diacylglycerol O-acyltransferase activity"/>
    <property type="evidence" value="ECO:0007669"/>
    <property type="project" value="UniProtKB-EC"/>
</dbReference>
<dbReference type="GO" id="GO:0050348">
    <property type="term" value="F:trehalose O-mycolyltransferase activity"/>
    <property type="evidence" value="ECO:0007669"/>
    <property type="project" value="UniProtKB-EC"/>
</dbReference>
<dbReference type="FunFam" id="3.40.50.1820:FF:000086">
    <property type="entry name" value="Diacylglycerol acyltransferase/mycolyltransferase Ag85C"/>
    <property type="match status" value="1"/>
</dbReference>
<dbReference type="Gene3D" id="3.40.50.1820">
    <property type="entry name" value="alpha/beta hydrolase"/>
    <property type="match status" value="1"/>
</dbReference>
<dbReference type="InterPro" id="IPR029058">
    <property type="entry name" value="AB_hydrolase_fold"/>
</dbReference>
<dbReference type="InterPro" id="IPR000801">
    <property type="entry name" value="Esterase-like"/>
</dbReference>
<dbReference type="InterPro" id="IPR050583">
    <property type="entry name" value="Mycobacterial_A85_antigen"/>
</dbReference>
<dbReference type="InterPro" id="IPR006311">
    <property type="entry name" value="TAT_signal"/>
</dbReference>
<dbReference type="PANTHER" id="PTHR48098:SF1">
    <property type="entry name" value="DIACYLGLYCEROL ACYLTRANSFERASE_MYCOLYLTRANSFERASE AG85A"/>
    <property type="match status" value="1"/>
</dbReference>
<dbReference type="PANTHER" id="PTHR48098">
    <property type="entry name" value="ENTEROCHELIN ESTERASE-RELATED"/>
    <property type="match status" value="1"/>
</dbReference>
<dbReference type="Pfam" id="PF00756">
    <property type="entry name" value="Esterase"/>
    <property type="match status" value="1"/>
</dbReference>
<dbReference type="SUPFAM" id="SSF53474">
    <property type="entry name" value="alpha/beta-Hydrolases"/>
    <property type="match status" value="1"/>
</dbReference>
<feature type="signal peptide" description="Tat-type signal" evidence="2">
    <location>
        <begin position="1"/>
        <end position="43"/>
    </location>
</feature>
<feature type="chain" id="PRO_0000426741" description="Diacylglycerol acyltransferase/mycolyltransferase Ag85A">
    <location>
        <begin position="44"/>
        <end position="338"/>
    </location>
</feature>
<feature type="region of interest" description="Fibronectin-binding" evidence="1">
    <location>
        <begin position="101"/>
        <end position="111"/>
    </location>
</feature>
<feature type="active site" description="Nucleophile" evidence="1">
    <location>
        <position position="169"/>
    </location>
</feature>
<feature type="active site" evidence="1">
    <location>
        <position position="273"/>
    </location>
</feature>
<feature type="active site" evidence="1">
    <location>
        <position position="305"/>
    </location>
</feature>
<feature type="binding site" evidence="1">
    <location>
        <begin position="85"/>
        <end position="86"/>
    </location>
    <ligand>
        <name>substrate</name>
    </ligand>
</feature>
<feature type="binding site" evidence="1">
    <location>
        <position position="169"/>
    </location>
    <ligand>
        <name>substrate</name>
    </ligand>
</feature>
<feature type="binding site" evidence="1">
    <location>
        <position position="197"/>
    </location>
    <ligand>
        <name>substrate</name>
    </ligand>
</feature>
<feature type="binding site" evidence="1">
    <location>
        <begin position="275"/>
        <end position="278"/>
    </location>
    <ligand>
        <name>substrate</name>
    </ligand>
</feature>
<feature type="binding site" evidence="1">
    <location>
        <position position="282"/>
    </location>
    <ligand>
        <name>substrate</name>
    </ligand>
</feature>
<feature type="binding site" evidence="1">
    <location>
        <begin position="305"/>
        <end position="307"/>
    </location>
    <ligand>
        <name>substrate</name>
    </ligand>
</feature>
<feature type="disulfide bond" evidence="1">
    <location>
        <begin position="130"/>
        <end position="135"/>
    </location>
</feature>
<protein>
    <recommendedName>
        <fullName>Diacylglycerol acyltransferase/mycolyltransferase Ag85A</fullName>
        <shortName>DGAT</shortName>
        <ecNumber>2.3.1.122</ecNumber>
        <ecNumber>2.3.1.20</ecNumber>
    </recommendedName>
    <alternativeName>
        <fullName>Acyl-CoA:diacylglycerol acyltransferase</fullName>
    </alternativeName>
    <alternativeName>
        <fullName>Antigen 85 complex A</fullName>
        <shortName>85A</shortName>
        <shortName>Ag85A</shortName>
    </alternativeName>
    <alternativeName>
        <fullName>Fibronectin-binding protein A</fullName>
        <shortName>Fbps A</shortName>
    </alternativeName>
</protein>
<proteinExistence type="inferred from homology"/>
<organism>
    <name type="scientific">Mycobacterium tuberculosis (strain CDC 1551 / Oshkosh)</name>
    <dbReference type="NCBI Taxonomy" id="83331"/>
    <lineage>
        <taxon>Bacteria</taxon>
        <taxon>Bacillati</taxon>
        <taxon>Actinomycetota</taxon>
        <taxon>Actinomycetes</taxon>
        <taxon>Mycobacteriales</taxon>
        <taxon>Mycobacteriaceae</taxon>
        <taxon>Mycobacterium</taxon>
        <taxon>Mycobacterium tuberculosis complex</taxon>
    </lineage>
</organism>